<sequence>MDIFKNRNFVRLFFAALASQMGTTVGNMAFAFFLLDRFSSQPSYTTLAELMYSLPTIFVFLIVGVVADRFDRKKVAENCDWIRAGLTVVLFFTLFTGNIPLVFCILFIRSAVTKFFFPAENSLVQAILPKEHYAKAAGLNQMLFSIFMVFGVGIGAFMYNTIGIEGAIILDFVSFIISGLLIRSCRIPKEARQPNGAFSWRKTSVKDSINDFREGILYILKNKLLASLIFGFFIFGFVNGGFAVLPMFTMKYGLAPDRYEWHTSVFTIALGFGLLAGSVIGTLISKKVKPHFLMSIPIFIAGLLIFVLGYTNILWVYYAAAFALGMCIGPINIAIGGWMPKIVHPKLMGRVSGMQDPFMMFAQSLTLGLVALLFPKFVSNIDYLYYGMGVIILLVFIFYFIALPKYSAQAVEVNVQEAFQEQPKKKARSV</sequence>
<feature type="chain" id="PRO_0000351508" description="Uncharacterized MFS-type transporter YkuC">
    <location>
        <begin position="1"/>
        <end position="430"/>
    </location>
</feature>
<feature type="transmembrane region" description="Helical" evidence="1">
    <location>
        <begin position="13"/>
        <end position="33"/>
    </location>
</feature>
<feature type="transmembrane region" description="Helical" evidence="1">
    <location>
        <begin position="47"/>
        <end position="67"/>
    </location>
</feature>
<feature type="transmembrane region" description="Helical" evidence="1">
    <location>
        <begin position="88"/>
        <end position="108"/>
    </location>
</feature>
<feature type="transmembrane region" description="Helical" evidence="1">
    <location>
        <begin position="138"/>
        <end position="158"/>
    </location>
</feature>
<feature type="transmembrane region" description="Helical" evidence="1">
    <location>
        <begin position="228"/>
        <end position="248"/>
    </location>
</feature>
<feature type="transmembrane region" description="Helical" evidence="1">
    <location>
        <begin position="264"/>
        <end position="284"/>
    </location>
</feature>
<feature type="transmembrane region" description="Helical" evidence="1">
    <location>
        <begin position="296"/>
        <end position="316"/>
    </location>
</feature>
<feature type="transmembrane region" description="Helical" evidence="1">
    <location>
        <begin position="319"/>
        <end position="339"/>
    </location>
</feature>
<feature type="transmembrane region" description="Helical" evidence="1">
    <location>
        <begin position="358"/>
        <end position="378"/>
    </location>
</feature>
<feature type="transmembrane region" description="Helical" evidence="1">
    <location>
        <begin position="383"/>
        <end position="403"/>
    </location>
</feature>
<feature type="sequence conflict" description="In Ref. 1; CAA10866." evidence="2" ref="1">
    <original>Y</original>
    <variation>N</variation>
    <location>
        <position position="399"/>
    </location>
</feature>
<keyword id="KW-1003">Cell membrane</keyword>
<keyword id="KW-0472">Membrane</keyword>
<keyword id="KW-1185">Reference proteome</keyword>
<keyword id="KW-0812">Transmembrane</keyword>
<keyword id="KW-1133">Transmembrane helix</keyword>
<keyword id="KW-0813">Transport</keyword>
<dbReference type="EMBL" id="AJ222587">
    <property type="protein sequence ID" value="CAA10866.1"/>
    <property type="molecule type" value="Genomic_DNA"/>
</dbReference>
<dbReference type="EMBL" id="AL009126">
    <property type="protein sequence ID" value="CAB13276.2"/>
    <property type="molecule type" value="Genomic_DNA"/>
</dbReference>
<dbReference type="PIR" id="H69864">
    <property type="entry name" value="H69864"/>
</dbReference>
<dbReference type="RefSeq" id="NP_389286.2">
    <property type="nucleotide sequence ID" value="NC_000964.3"/>
</dbReference>
<dbReference type="RefSeq" id="WP_003245267.1">
    <property type="nucleotide sequence ID" value="NZ_OZ025638.1"/>
</dbReference>
<dbReference type="FunCoup" id="O31695">
    <property type="interactions" value="9"/>
</dbReference>
<dbReference type="STRING" id="224308.BSU14030"/>
<dbReference type="PaxDb" id="224308-BSU14030"/>
<dbReference type="EnsemblBacteria" id="CAB13276">
    <property type="protein sequence ID" value="CAB13276"/>
    <property type="gene ID" value="BSU_14030"/>
</dbReference>
<dbReference type="GeneID" id="939224"/>
<dbReference type="KEGG" id="bsu:BSU14030"/>
<dbReference type="PATRIC" id="fig|224308.179.peg.1530"/>
<dbReference type="eggNOG" id="COG2814">
    <property type="taxonomic scope" value="Bacteria"/>
</dbReference>
<dbReference type="InParanoid" id="O31695"/>
<dbReference type="OrthoDB" id="9775268at2"/>
<dbReference type="PhylomeDB" id="O31695"/>
<dbReference type="BioCyc" id="BSUB:BSU14030-MONOMER"/>
<dbReference type="Proteomes" id="UP000001570">
    <property type="component" value="Chromosome"/>
</dbReference>
<dbReference type="GO" id="GO:0005886">
    <property type="term" value="C:plasma membrane"/>
    <property type="evidence" value="ECO:0007669"/>
    <property type="project" value="UniProtKB-SubCell"/>
</dbReference>
<dbReference type="GO" id="GO:0022857">
    <property type="term" value="F:transmembrane transporter activity"/>
    <property type="evidence" value="ECO:0007669"/>
    <property type="project" value="InterPro"/>
</dbReference>
<dbReference type="CDD" id="cd06173">
    <property type="entry name" value="MFS_MefA_like"/>
    <property type="match status" value="1"/>
</dbReference>
<dbReference type="Gene3D" id="1.20.1250.20">
    <property type="entry name" value="MFS general substrate transporter like domains"/>
    <property type="match status" value="1"/>
</dbReference>
<dbReference type="InterPro" id="IPR004751">
    <property type="entry name" value="Drug_antiport"/>
</dbReference>
<dbReference type="InterPro" id="IPR011701">
    <property type="entry name" value="MFS"/>
</dbReference>
<dbReference type="InterPro" id="IPR020846">
    <property type="entry name" value="MFS_dom"/>
</dbReference>
<dbReference type="InterPro" id="IPR036259">
    <property type="entry name" value="MFS_trans_sf"/>
</dbReference>
<dbReference type="NCBIfam" id="TIGR00900">
    <property type="entry name" value="2A0121"/>
    <property type="match status" value="1"/>
</dbReference>
<dbReference type="PANTHER" id="PTHR43266">
    <property type="entry name" value="MACROLIDE-EFFLUX PROTEIN"/>
    <property type="match status" value="1"/>
</dbReference>
<dbReference type="PANTHER" id="PTHR43266:SF8">
    <property type="entry name" value="MACROLIDE-EFFLUX PROTEIN"/>
    <property type="match status" value="1"/>
</dbReference>
<dbReference type="Pfam" id="PF07690">
    <property type="entry name" value="MFS_1"/>
    <property type="match status" value="1"/>
</dbReference>
<dbReference type="SUPFAM" id="SSF103473">
    <property type="entry name" value="MFS general substrate transporter"/>
    <property type="match status" value="1"/>
</dbReference>
<dbReference type="PROSITE" id="PS50850">
    <property type="entry name" value="MFS"/>
    <property type="match status" value="1"/>
</dbReference>
<gene>
    <name type="primary">ykuC</name>
    <name type="ordered locus">BSU14030</name>
</gene>
<name>YKUC_BACSU</name>
<protein>
    <recommendedName>
        <fullName>Uncharacterized MFS-type transporter YkuC</fullName>
    </recommendedName>
</protein>
<comment type="subcellular location">
    <subcellularLocation>
        <location evidence="2">Cell membrane</location>
        <topology evidence="2">Multi-pass membrane protein</topology>
    </subcellularLocation>
</comment>
<comment type="similarity">
    <text evidence="2">Belongs to the major facilitator superfamily.</text>
</comment>
<proteinExistence type="inferred from homology"/>
<accession>O31695</accession>
<accession>O31400</accession>
<reference key="1">
    <citation type="submission" date="1997-11" db="EMBL/GenBank/DDBJ databases">
        <title>Sequence of the Bacillus subtilis chromosome from ykuA to cse-15.</title>
        <authorList>
            <person name="Scanlan E."/>
            <person name="Devine K.M."/>
        </authorList>
    </citation>
    <scope>NUCLEOTIDE SEQUENCE [GENOMIC DNA]</scope>
    <source>
        <strain>168</strain>
    </source>
</reference>
<reference key="2">
    <citation type="journal article" date="1997" name="Nature">
        <title>The complete genome sequence of the Gram-positive bacterium Bacillus subtilis.</title>
        <authorList>
            <person name="Kunst F."/>
            <person name="Ogasawara N."/>
            <person name="Moszer I."/>
            <person name="Albertini A.M."/>
            <person name="Alloni G."/>
            <person name="Azevedo V."/>
            <person name="Bertero M.G."/>
            <person name="Bessieres P."/>
            <person name="Bolotin A."/>
            <person name="Borchert S."/>
            <person name="Borriss R."/>
            <person name="Boursier L."/>
            <person name="Brans A."/>
            <person name="Braun M."/>
            <person name="Brignell S.C."/>
            <person name="Bron S."/>
            <person name="Brouillet S."/>
            <person name="Bruschi C.V."/>
            <person name="Caldwell B."/>
            <person name="Capuano V."/>
            <person name="Carter N.M."/>
            <person name="Choi S.-K."/>
            <person name="Codani J.-J."/>
            <person name="Connerton I.F."/>
            <person name="Cummings N.J."/>
            <person name="Daniel R.A."/>
            <person name="Denizot F."/>
            <person name="Devine K.M."/>
            <person name="Duesterhoeft A."/>
            <person name="Ehrlich S.D."/>
            <person name="Emmerson P.T."/>
            <person name="Entian K.-D."/>
            <person name="Errington J."/>
            <person name="Fabret C."/>
            <person name="Ferrari E."/>
            <person name="Foulger D."/>
            <person name="Fritz C."/>
            <person name="Fujita M."/>
            <person name="Fujita Y."/>
            <person name="Fuma S."/>
            <person name="Galizzi A."/>
            <person name="Galleron N."/>
            <person name="Ghim S.-Y."/>
            <person name="Glaser P."/>
            <person name="Goffeau A."/>
            <person name="Golightly E.J."/>
            <person name="Grandi G."/>
            <person name="Guiseppi G."/>
            <person name="Guy B.J."/>
            <person name="Haga K."/>
            <person name="Haiech J."/>
            <person name="Harwood C.R."/>
            <person name="Henaut A."/>
            <person name="Hilbert H."/>
            <person name="Holsappel S."/>
            <person name="Hosono S."/>
            <person name="Hullo M.-F."/>
            <person name="Itaya M."/>
            <person name="Jones L.-M."/>
            <person name="Joris B."/>
            <person name="Karamata D."/>
            <person name="Kasahara Y."/>
            <person name="Klaerr-Blanchard M."/>
            <person name="Klein C."/>
            <person name="Kobayashi Y."/>
            <person name="Koetter P."/>
            <person name="Koningstein G."/>
            <person name="Krogh S."/>
            <person name="Kumano M."/>
            <person name="Kurita K."/>
            <person name="Lapidus A."/>
            <person name="Lardinois S."/>
            <person name="Lauber J."/>
            <person name="Lazarevic V."/>
            <person name="Lee S.-M."/>
            <person name="Levine A."/>
            <person name="Liu H."/>
            <person name="Masuda S."/>
            <person name="Mauel C."/>
            <person name="Medigue C."/>
            <person name="Medina N."/>
            <person name="Mellado R.P."/>
            <person name="Mizuno M."/>
            <person name="Moestl D."/>
            <person name="Nakai S."/>
            <person name="Noback M."/>
            <person name="Noone D."/>
            <person name="O'Reilly M."/>
            <person name="Ogawa K."/>
            <person name="Ogiwara A."/>
            <person name="Oudega B."/>
            <person name="Park S.-H."/>
            <person name="Parro V."/>
            <person name="Pohl T.M."/>
            <person name="Portetelle D."/>
            <person name="Porwollik S."/>
            <person name="Prescott A.M."/>
            <person name="Presecan E."/>
            <person name="Pujic P."/>
            <person name="Purnelle B."/>
            <person name="Rapoport G."/>
            <person name="Rey M."/>
            <person name="Reynolds S."/>
            <person name="Rieger M."/>
            <person name="Rivolta C."/>
            <person name="Rocha E."/>
            <person name="Roche B."/>
            <person name="Rose M."/>
            <person name="Sadaie Y."/>
            <person name="Sato T."/>
            <person name="Scanlan E."/>
            <person name="Schleich S."/>
            <person name="Schroeter R."/>
            <person name="Scoffone F."/>
            <person name="Sekiguchi J."/>
            <person name="Sekowska A."/>
            <person name="Seror S.J."/>
            <person name="Serror P."/>
            <person name="Shin B.-S."/>
            <person name="Soldo B."/>
            <person name="Sorokin A."/>
            <person name="Tacconi E."/>
            <person name="Takagi T."/>
            <person name="Takahashi H."/>
            <person name="Takemaru K."/>
            <person name="Takeuchi M."/>
            <person name="Tamakoshi A."/>
            <person name="Tanaka T."/>
            <person name="Terpstra P."/>
            <person name="Tognoni A."/>
            <person name="Tosato V."/>
            <person name="Uchiyama S."/>
            <person name="Vandenbol M."/>
            <person name="Vannier F."/>
            <person name="Vassarotti A."/>
            <person name="Viari A."/>
            <person name="Wambutt R."/>
            <person name="Wedler E."/>
            <person name="Wedler H."/>
            <person name="Weitzenegger T."/>
            <person name="Winters P."/>
            <person name="Wipat A."/>
            <person name="Yamamoto H."/>
            <person name="Yamane K."/>
            <person name="Yasumoto K."/>
            <person name="Yata K."/>
            <person name="Yoshida K."/>
            <person name="Yoshikawa H.-F."/>
            <person name="Zumstein E."/>
            <person name="Yoshikawa H."/>
            <person name="Danchin A."/>
        </authorList>
    </citation>
    <scope>NUCLEOTIDE SEQUENCE [LARGE SCALE GENOMIC DNA]</scope>
    <source>
        <strain>168</strain>
    </source>
</reference>
<reference key="3">
    <citation type="journal article" date="2009" name="Microbiology">
        <title>From a consortium sequence to a unified sequence: the Bacillus subtilis 168 reference genome a decade later.</title>
        <authorList>
            <person name="Barbe V."/>
            <person name="Cruveiller S."/>
            <person name="Kunst F."/>
            <person name="Lenoble P."/>
            <person name="Meurice G."/>
            <person name="Sekowska A."/>
            <person name="Vallenet D."/>
            <person name="Wang T."/>
            <person name="Moszer I."/>
            <person name="Medigue C."/>
            <person name="Danchin A."/>
        </authorList>
    </citation>
    <scope>SEQUENCE REVISION TO 67; 197 AND 399</scope>
</reference>
<evidence type="ECO:0000255" key="1"/>
<evidence type="ECO:0000305" key="2"/>
<organism>
    <name type="scientific">Bacillus subtilis (strain 168)</name>
    <dbReference type="NCBI Taxonomy" id="224308"/>
    <lineage>
        <taxon>Bacteria</taxon>
        <taxon>Bacillati</taxon>
        <taxon>Bacillota</taxon>
        <taxon>Bacilli</taxon>
        <taxon>Bacillales</taxon>
        <taxon>Bacillaceae</taxon>
        <taxon>Bacillus</taxon>
    </lineage>
</organism>